<protein>
    <recommendedName>
        <fullName evidence="1">Acetyl-coenzyme A carboxylase carboxyl transferase subunit beta</fullName>
        <shortName evidence="1">ACCase subunit beta</shortName>
        <shortName evidence="1">Acetyl-CoA carboxylase carboxyltransferase subunit beta</shortName>
        <ecNumber evidence="1">2.1.3.15</ecNumber>
    </recommendedName>
</protein>
<comment type="function">
    <text evidence="1">Component of the acetyl coenzyme A carboxylase (ACC) complex. Biotin carboxylase (BC) catalyzes the carboxylation of biotin on its carrier protein (BCCP) and then the CO(2) group is transferred by the transcarboxylase to acetyl-CoA to form malonyl-CoA.</text>
</comment>
<comment type="catalytic activity">
    <reaction evidence="1">
        <text>N(6)-carboxybiotinyl-L-lysyl-[protein] + acetyl-CoA = N(6)-biotinyl-L-lysyl-[protein] + malonyl-CoA</text>
        <dbReference type="Rhea" id="RHEA:54728"/>
        <dbReference type="Rhea" id="RHEA-COMP:10505"/>
        <dbReference type="Rhea" id="RHEA-COMP:10506"/>
        <dbReference type="ChEBI" id="CHEBI:57288"/>
        <dbReference type="ChEBI" id="CHEBI:57384"/>
        <dbReference type="ChEBI" id="CHEBI:83144"/>
        <dbReference type="ChEBI" id="CHEBI:83145"/>
        <dbReference type="EC" id="2.1.3.15"/>
    </reaction>
</comment>
<comment type="pathway">
    <text evidence="1">Lipid metabolism; malonyl-CoA biosynthesis; malonyl-CoA from acetyl-CoA: step 1/1.</text>
</comment>
<comment type="subunit">
    <text evidence="1">Acetyl-CoA carboxylase is a heterohexamer composed of biotin carboxyl carrier protein (AccB), biotin carboxylase (AccC) and two subunits each of ACCase subunit alpha (AccA) and ACCase subunit beta (AccD).</text>
</comment>
<comment type="subcellular location">
    <subcellularLocation>
        <location evidence="1">Cytoplasm</location>
    </subcellularLocation>
</comment>
<comment type="similarity">
    <text evidence="1">Belongs to the AccD/PCCB family.</text>
</comment>
<keyword id="KW-0067">ATP-binding</keyword>
<keyword id="KW-0963">Cytoplasm</keyword>
<keyword id="KW-0275">Fatty acid biosynthesis</keyword>
<keyword id="KW-0276">Fatty acid metabolism</keyword>
<keyword id="KW-0444">Lipid biosynthesis</keyword>
<keyword id="KW-0443">Lipid metabolism</keyword>
<keyword id="KW-0547">Nucleotide-binding</keyword>
<keyword id="KW-1185">Reference proteome</keyword>
<keyword id="KW-0808">Transferase</keyword>
<name>ACCD_BRADU</name>
<accession>Q89WE3</accession>
<sequence>MNWLTNVVRPKIRNMLRRETPENLWIKCPDSGQLVFYKDVEANQFVIPGSNYHMRMGAVARLKSIFDNETWYDVALPDVTPDPLKFRDEKKYVDRIKDARARTNLNDAIKVGYGKLEGAAVVIAVQDFDFMGGSLGMAAGEAIVRGLELAVEKKSPFIVFAASGGARMQEGILSLMQMPRTTVAVQMLREAKQPYIVVLTNPTTGGVTASYAMLGDVQIAEPGALIGFAGARVIEQTIREKLPEGFQRAEYLKEHGMVDMVVHRHDLRPTLARLCRLLTKAPALETASKSVQPVVSPAQIVSASETAPAAPHA</sequence>
<feature type="chain" id="PRO_0000389696" description="Acetyl-coenzyme A carboxylase carboxyl transferase subunit beta">
    <location>
        <begin position="1"/>
        <end position="313"/>
    </location>
</feature>
<feature type="domain" description="CoA carboxyltransferase N-terminal" evidence="2">
    <location>
        <begin position="24"/>
        <end position="293"/>
    </location>
</feature>
<gene>
    <name evidence="1" type="primary">accD</name>
    <name type="ordered locus">blr0747</name>
</gene>
<organism>
    <name type="scientific">Bradyrhizobium diazoefficiens (strain JCM 10833 / BCRC 13528 / IAM 13628 / NBRC 14792 / USDA 110)</name>
    <dbReference type="NCBI Taxonomy" id="224911"/>
    <lineage>
        <taxon>Bacteria</taxon>
        <taxon>Pseudomonadati</taxon>
        <taxon>Pseudomonadota</taxon>
        <taxon>Alphaproteobacteria</taxon>
        <taxon>Hyphomicrobiales</taxon>
        <taxon>Nitrobacteraceae</taxon>
        <taxon>Bradyrhizobium</taxon>
    </lineage>
</organism>
<proteinExistence type="inferred from homology"/>
<reference key="1">
    <citation type="journal article" date="2002" name="DNA Res.">
        <title>Complete genomic sequence of nitrogen-fixing symbiotic bacterium Bradyrhizobium japonicum USDA110.</title>
        <authorList>
            <person name="Kaneko T."/>
            <person name="Nakamura Y."/>
            <person name="Sato S."/>
            <person name="Minamisawa K."/>
            <person name="Uchiumi T."/>
            <person name="Sasamoto S."/>
            <person name="Watanabe A."/>
            <person name="Idesawa K."/>
            <person name="Iriguchi M."/>
            <person name="Kawashima K."/>
            <person name="Kohara M."/>
            <person name="Matsumoto M."/>
            <person name="Shimpo S."/>
            <person name="Tsuruoka H."/>
            <person name="Wada T."/>
            <person name="Yamada M."/>
            <person name="Tabata S."/>
        </authorList>
    </citation>
    <scope>NUCLEOTIDE SEQUENCE [LARGE SCALE GENOMIC DNA]</scope>
    <source>
        <strain>JCM 10833 / BCRC 13528 / IAM 13628 / NBRC 14792 / USDA 110</strain>
    </source>
</reference>
<evidence type="ECO:0000255" key="1">
    <source>
        <dbReference type="HAMAP-Rule" id="MF_01395"/>
    </source>
</evidence>
<evidence type="ECO:0000255" key="2">
    <source>
        <dbReference type="PROSITE-ProRule" id="PRU01136"/>
    </source>
</evidence>
<dbReference type="EC" id="2.1.3.15" evidence="1"/>
<dbReference type="EMBL" id="BA000040">
    <property type="protein sequence ID" value="BAC46012.1"/>
    <property type="molecule type" value="Genomic_DNA"/>
</dbReference>
<dbReference type="RefSeq" id="NP_767387.1">
    <property type="nucleotide sequence ID" value="NC_004463.1"/>
</dbReference>
<dbReference type="RefSeq" id="WP_011083571.1">
    <property type="nucleotide sequence ID" value="NC_004463.1"/>
</dbReference>
<dbReference type="SMR" id="Q89WE3"/>
<dbReference type="FunCoup" id="Q89WE3">
    <property type="interactions" value="553"/>
</dbReference>
<dbReference type="STRING" id="224911.AAV28_00585"/>
<dbReference type="EnsemblBacteria" id="BAC46012">
    <property type="protein sequence ID" value="BAC46012"/>
    <property type="gene ID" value="BAC46012"/>
</dbReference>
<dbReference type="GeneID" id="46488023"/>
<dbReference type="KEGG" id="bja:blr0747"/>
<dbReference type="PATRIC" id="fig|224911.44.peg.121"/>
<dbReference type="eggNOG" id="COG0777">
    <property type="taxonomic scope" value="Bacteria"/>
</dbReference>
<dbReference type="HOGENOM" id="CLU_015486_1_0_5"/>
<dbReference type="InParanoid" id="Q89WE3"/>
<dbReference type="OrthoDB" id="9772975at2"/>
<dbReference type="PhylomeDB" id="Q89WE3"/>
<dbReference type="UniPathway" id="UPA00655">
    <property type="reaction ID" value="UER00711"/>
</dbReference>
<dbReference type="Proteomes" id="UP000002526">
    <property type="component" value="Chromosome"/>
</dbReference>
<dbReference type="GO" id="GO:0009329">
    <property type="term" value="C:acetate CoA-transferase complex"/>
    <property type="evidence" value="ECO:0000318"/>
    <property type="project" value="GO_Central"/>
</dbReference>
<dbReference type="GO" id="GO:0003989">
    <property type="term" value="F:acetyl-CoA carboxylase activity"/>
    <property type="evidence" value="ECO:0007669"/>
    <property type="project" value="InterPro"/>
</dbReference>
<dbReference type="GO" id="GO:0005524">
    <property type="term" value="F:ATP binding"/>
    <property type="evidence" value="ECO:0007669"/>
    <property type="project" value="UniProtKB-KW"/>
</dbReference>
<dbReference type="GO" id="GO:0016743">
    <property type="term" value="F:carboxyl- or carbamoyltransferase activity"/>
    <property type="evidence" value="ECO:0007669"/>
    <property type="project" value="UniProtKB-UniRule"/>
</dbReference>
<dbReference type="GO" id="GO:0006633">
    <property type="term" value="P:fatty acid biosynthetic process"/>
    <property type="evidence" value="ECO:0000318"/>
    <property type="project" value="GO_Central"/>
</dbReference>
<dbReference type="GO" id="GO:2001295">
    <property type="term" value="P:malonyl-CoA biosynthetic process"/>
    <property type="evidence" value="ECO:0000318"/>
    <property type="project" value="GO_Central"/>
</dbReference>
<dbReference type="GO" id="GO:0017148">
    <property type="term" value="P:negative regulation of translation"/>
    <property type="evidence" value="ECO:0000318"/>
    <property type="project" value="GO_Central"/>
</dbReference>
<dbReference type="Gene3D" id="3.90.226.10">
    <property type="entry name" value="2-enoyl-CoA Hydratase, Chain A, domain 1"/>
    <property type="match status" value="1"/>
</dbReference>
<dbReference type="HAMAP" id="MF_01395">
    <property type="entry name" value="AcetylCoA_CT_beta"/>
    <property type="match status" value="1"/>
</dbReference>
<dbReference type="InterPro" id="IPR034733">
    <property type="entry name" value="AcCoA_carboxyl_beta"/>
</dbReference>
<dbReference type="InterPro" id="IPR000438">
    <property type="entry name" value="Acetyl_CoA_COase_Trfase_b_su"/>
</dbReference>
<dbReference type="InterPro" id="IPR029045">
    <property type="entry name" value="ClpP/crotonase-like_dom_sf"/>
</dbReference>
<dbReference type="InterPro" id="IPR011762">
    <property type="entry name" value="COA_CT_N"/>
</dbReference>
<dbReference type="NCBIfam" id="TIGR00515">
    <property type="entry name" value="accD"/>
    <property type="match status" value="1"/>
</dbReference>
<dbReference type="PANTHER" id="PTHR42995">
    <property type="entry name" value="ACETYL-COENZYME A CARBOXYLASE CARBOXYL TRANSFERASE SUBUNIT BETA, CHLOROPLASTIC"/>
    <property type="match status" value="1"/>
</dbReference>
<dbReference type="PANTHER" id="PTHR42995:SF5">
    <property type="entry name" value="ACETYL-COENZYME A CARBOXYLASE CARBOXYL TRANSFERASE SUBUNIT BETA, CHLOROPLASTIC"/>
    <property type="match status" value="1"/>
</dbReference>
<dbReference type="Pfam" id="PF01039">
    <property type="entry name" value="Carboxyl_trans"/>
    <property type="match status" value="1"/>
</dbReference>
<dbReference type="PRINTS" id="PR01070">
    <property type="entry name" value="ACCCTRFRASEB"/>
</dbReference>
<dbReference type="SUPFAM" id="SSF52096">
    <property type="entry name" value="ClpP/crotonase"/>
    <property type="match status" value="1"/>
</dbReference>
<dbReference type="PROSITE" id="PS50980">
    <property type="entry name" value="COA_CT_NTER"/>
    <property type="match status" value="1"/>
</dbReference>